<organism>
    <name type="scientific">Mus musculus</name>
    <name type="common">Mouse</name>
    <dbReference type="NCBI Taxonomy" id="10090"/>
    <lineage>
        <taxon>Eukaryota</taxon>
        <taxon>Metazoa</taxon>
        <taxon>Chordata</taxon>
        <taxon>Craniata</taxon>
        <taxon>Vertebrata</taxon>
        <taxon>Euteleostomi</taxon>
        <taxon>Mammalia</taxon>
        <taxon>Eutheria</taxon>
        <taxon>Euarchontoglires</taxon>
        <taxon>Glires</taxon>
        <taxon>Rodentia</taxon>
        <taxon>Myomorpha</taxon>
        <taxon>Muroidea</taxon>
        <taxon>Muridae</taxon>
        <taxon>Murinae</taxon>
        <taxon>Mus</taxon>
        <taxon>Mus</taxon>
    </lineage>
</organism>
<name>RL39L_MOUSE</name>
<dbReference type="EMBL" id="AK005645">
    <property type="protein sequence ID" value="BAB24165.1"/>
    <property type="molecule type" value="mRNA"/>
</dbReference>
<dbReference type="EMBL" id="AK019681">
    <property type="protein sequence ID" value="BAB31834.1"/>
    <property type="molecule type" value="mRNA"/>
</dbReference>
<dbReference type="EMBL" id="BC023885">
    <property type="protein sequence ID" value="AAH23885.1"/>
    <property type="molecule type" value="mRNA"/>
</dbReference>
<dbReference type="EMBL" id="BC051469">
    <property type="protein sequence ID" value="AAH51469.1"/>
    <property type="molecule type" value="mRNA"/>
</dbReference>
<dbReference type="CCDS" id="CCDS37248.1"/>
<dbReference type="RefSeq" id="NP_080870.1">
    <property type="nucleotide sequence ID" value="NM_026594.2"/>
</dbReference>
<dbReference type="RefSeq" id="XP_006522569.1">
    <property type="nucleotide sequence ID" value="XM_006522506.4"/>
</dbReference>
<dbReference type="PDB" id="7CPV">
    <property type="method" value="EM"/>
    <property type="resolution" value="3.03 A"/>
    <property type="chains" value="Ll=1-51"/>
</dbReference>
<dbReference type="PDB" id="8PFR">
    <property type="method" value="EM"/>
    <property type="resolution" value="2.15 A"/>
    <property type="chains" value="RN=1-51"/>
</dbReference>
<dbReference type="PDBsum" id="7CPV"/>
<dbReference type="PDBsum" id="8PFR"/>
<dbReference type="EMDB" id="EMD-17653"/>
<dbReference type="EMDB" id="EMD-30433"/>
<dbReference type="SMR" id="Q9CQD0"/>
<dbReference type="ComplexPortal" id="CPX-7662">
    <property type="entry name" value="60S cytosolic large ribosomal subunit, testis-specific variant"/>
</dbReference>
<dbReference type="FunCoup" id="Q9CQD0">
    <property type="interactions" value="167"/>
</dbReference>
<dbReference type="IntAct" id="Q9CQD0">
    <property type="interactions" value="1"/>
</dbReference>
<dbReference type="STRING" id="10090.ENSMUSP00000041794"/>
<dbReference type="PhosphoSitePlus" id="Q9CQD0"/>
<dbReference type="PaxDb" id="10090-ENSMUSP00000041794"/>
<dbReference type="PeptideAtlas" id="Q9CQD0"/>
<dbReference type="ProteomicsDB" id="340796"/>
<dbReference type="DNASU" id="68172"/>
<dbReference type="Ensembl" id="ENSMUST00000044103.6">
    <property type="protein sequence ID" value="ENSMUSP00000041794.6"/>
    <property type="gene ID" value="ENSMUSG00000039209.13"/>
</dbReference>
<dbReference type="Ensembl" id="ENSMUST00000121292.8">
    <property type="protein sequence ID" value="ENSMUSP00000112791.2"/>
    <property type="gene ID" value="ENSMUSG00000039209.13"/>
</dbReference>
<dbReference type="GeneID" id="68172"/>
<dbReference type="KEGG" id="mmu:68172"/>
<dbReference type="UCSC" id="uc007yde.1">
    <property type="organism name" value="mouse"/>
</dbReference>
<dbReference type="AGR" id="MGI:1915422"/>
<dbReference type="CTD" id="116832"/>
<dbReference type="MGI" id="MGI:1915422">
    <property type="gene designation" value="Rpl39l"/>
</dbReference>
<dbReference type="VEuPathDB" id="HostDB:ENSMUSG00000039209"/>
<dbReference type="eggNOG" id="KOG0002">
    <property type="taxonomic scope" value="Eukaryota"/>
</dbReference>
<dbReference type="GeneTree" id="ENSGT00940000162325"/>
<dbReference type="HOGENOM" id="CLU_181948_3_0_1"/>
<dbReference type="InParanoid" id="Q9CQD0"/>
<dbReference type="OMA" id="PWIRMKT"/>
<dbReference type="OrthoDB" id="9943805at2759"/>
<dbReference type="TreeFam" id="TF300223"/>
<dbReference type="Reactome" id="R-MMU-156827">
    <property type="pathway name" value="L13a-mediated translational silencing of Ceruloplasmin expression"/>
</dbReference>
<dbReference type="Reactome" id="R-MMU-1799339">
    <property type="pathway name" value="SRP-dependent cotranslational protein targeting to membrane"/>
</dbReference>
<dbReference type="Reactome" id="R-MMU-6791226">
    <property type="pathway name" value="Major pathway of rRNA processing in the nucleolus and cytosol"/>
</dbReference>
<dbReference type="Reactome" id="R-MMU-72689">
    <property type="pathway name" value="Formation of a pool of free 40S subunits"/>
</dbReference>
<dbReference type="Reactome" id="R-MMU-72706">
    <property type="pathway name" value="GTP hydrolysis and joining of the 60S ribosomal subunit"/>
</dbReference>
<dbReference type="Reactome" id="R-MMU-975956">
    <property type="pathway name" value="Nonsense Mediated Decay (NMD) independent of the Exon Junction Complex (EJC)"/>
</dbReference>
<dbReference type="Reactome" id="R-MMU-975957">
    <property type="pathway name" value="Nonsense Mediated Decay (NMD) enhanced by the Exon Junction Complex (EJC)"/>
</dbReference>
<dbReference type="BioGRID-ORCS" id="68172">
    <property type="hits" value="2 hits in 70 CRISPR screens"/>
</dbReference>
<dbReference type="ChiTaRS" id="Rpl39l">
    <property type="organism name" value="mouse"/>
</dbReference>
<dbReference type="PRO" id="PR:Q9CQD0"/>
<dbReference type="Proteomes" id="UP000000589">
    <property type="component" value="Chromosome 16"/>
</dbReference>
<dbReference type="RNAct" id="Q9CQD0">
    <property type="molecule type" value="protein"/>
</dbReference>
<dbReference type="Bgee" id="ENSMUSG00000039209">
    <property type="expression patterns" value="Expressed in spermatid and 88 other cell types or tissues"/>
</dbReference>
<dbReference type="GO" id="GO:0022625">
    <property type="term" value="C:cytosolic large ribosomal subunit"/>
    <property type="evidence" value="ECO:0000314"/>
    <property type="project" value="UniProtKB"/>
</dbReference>
<dbReference type="GO" id="GO:0003735">
    <property type="term" value="F:structural constituent of ribosome"/>
    <property type="evidence" value="ECO:0000314"/>
    <property type="project" value="UniProtKB"/>
</dbReference>
<dbReference type="GO" id="GO:0002181">
    <property type="term" value="P:cytoplasmic translation"/>
    <property type="evidence" value="ECO:0000315"/>
    <property type="project" value="UniProtKB"/>
</dbReference>
<dbReference type="GO" id="GO:0007283">
    <property type="term" value="P:spermatogenesis"/>
    <property type="evidence" value="ECO:0000315"/>
    <property type="project" value="UniProtKB"/>
</dbReference>
<dbReference type="FunFam" id="1.10.1620.10:FF:000001">
    <property type="entry name" value="60S ribosomal protein-like L39"/>
    <property type="match status" value="1"/>
</dbReference>
<dbReference type="Gene3D" id="1.10.1620.10">
    <property type="entry name" value="Ribosomal protein L39e"/>
    <property type="match status" value="1"/>
</dbReference>
<dbReference type="HAMAP" id="MF_00629">
    <property type="entry name" value="Ribosomal_eL39"/>
    <property type="match status" value="1"/>
</dbReference>
<dbReference type="InterPro" id="IPR000077">
    <property type="entry name" value="Ribosomal_eL39"/>
</dbReference>
<dbReference type="InterPro" id="IPR020083">
    <property type="entry name" value="Ribosomal_eL39_CS"/>
</dbReference>
<dbReference type="InterPro" id="IPR023626">
    <property type="entry name" value="Ribosomal_eL39_dom_sf"/>
</dbReference>
<dbReference type="PANTHER" id="PTHR19970:SF22">
    <property type="entry name" value="RIBOSOMAL PROTEIN EL39-LIKE 2"/>
    <property type="match status" value="1"/>
</dbReference>
<dbReference type="PANTHER" id="PTHR19970">
    <property type="entry name" value="RIBOSOMAL PROTEIN L39E"/>
    <property type="match status" value="1"/>
</dbReference>
<dbReference type="Pfam" id="PF00832">
    <property type="entry name" value="Ribosomal_L39"/>
    <property type="match status" value="1"/>
</dbReference>
<dbReference type="SUPFAM" id="SSF48662">
    <property type="entry name" value="Ribosomal protein L39e"/>
    <property type="match status" value="1"/>
</dbReference>
<dbReference type="PROSITE" id="PS00051">
    <property type="entry name" value="RIBOSOMAL_L39E"/>
    <property type="match status" value="1"/>
</dbReference>
<evidence type="ECO:0000269" key="1">
    <source>
    </source>
</evidence>
<evidence type="ECO:0000269" key="2">
    <source>
    </source>
</evidence>
<evidence type="ECO:0000269" key="3">
    <source>
    </source>
</evidence>
<evidence type="ECO:0000269" key="4">
    <source>
    </source>
</evidence>
<evidence type="ECO:0000303" key="5">
    <source>
    </source>
</evidence>
<evidence type="ECO:0000305" key="6"/>
<evidence type="ECO:0000305" key="7">
    <source>
    </source>
</evidence>
<evidence type="ECO:0000312" key="8">
    <source>
        <dbReference type="EMBL" id="AAH51469.1"/>
    </source>
</evidence>
<evidence type="ECO:0000312" key="9">
    <source>
        <dbReference type="MGI" id="MGI:1915422"/>
    </source>
</evidence>
<evidence type="ECO:0007744" key="10">
    <source>
        <dbReference type="PDB" id="7CPV"/>
    </source>
</evidence>
<proteinExistence type="evidence at protein level"/>
<feature type="chain" id="PRO_0000457814" description="Large ribosomal subunit protein eL39-like">
    <location>
        <begin position="1"/>
        <end position="51"/>
    </location>
</feature>
<accession>Q9CQD0</accession>
<keyword id="KW-0002">3D-structure</keyword>
<keyword id="KW-0963">Cytoplasm</keyword>
<keyword id="KW-1185">Reference proteome</keyword>
<keyword id="KW-0687">Ribonucleoprotein</keyword>
<keyword id="KW-0689">Ribosomal protein</keyword>
<protein>
    <recommendedName>
        <fullName evidence="6">Large ribosomal subunit protein eL39-like</fullName>
    </recommendedName>
    <alternativeName>
        <fullName>60S ribosomal protein L39-like</fullName>
    </alternativeName>
</protein>
<gene>
    <name evidence="5 9" type="primary">Rpl39l</name>
</gene>
<sequence length="51" mass="6338">MASHKTFRIKRFLAKKQKQNRPIPQWIQMKTGNKIMYNSKRRHWRRTKLGL</sequence>
<comment type="function">
    <text evidence="2 3 4">Male germ cell-specific component of the ribosome, which is required for the formation of sperm and male fertility (PubMed:34825148, PubMed:36517592). Replaces the RPL39 paralog in the ribosome of male germ cells (PubMed:36517592). The ribosome is a large ribonucleoprotein complex responsible for the synthesis of proteins in the cell (PubMed:34428590, PubMed:36517592). The male germ cell-specific ribosome displays a ribosomal polypeptide exit tunnel of distinct size and charge states compared with the classical ribosome (PubMed:36517592). It is responsible for regulating the biosynthesis and folding of a subset of male germ-cell-specific proteins that are essential for the formation of sperm (PubMed:36517592).</text>
</comment>
<comment type="subunit">
    <text evidence="4">Component of a male germ cell-specific 60S large ribosomal subunit (LSU), which contains RPL10L and RPL39L, instead of RPL10 and RPL39 paralogs (PubMed:36517592). The composition of the rest of the complex is similar to classical ribosomes (PubMed:36517592).</text>
</comment>
<comment type="subcellular location">
    <subcellularLocation>
        <location evidence="7">Cytoplasm</location>
    </subcellularLocation>
</comment>
<comment type="tissue specificity">
    <text evidence="1 3 4">Highly expressed in spermatocytes and spermatids (PubMed:34825148, PubMed:36517592). Highly expressed in embryonic stem cells (PubMed:24452241).</text>
</comment>
<comment type="disruption phenotype">
    <text evidence="3 4">Defective sperm formation, resulting in substantially reduced male fertility (PubMed:34825148, PubMed:36517592). Male mice show smaller testis sizes, lower testis/body weight ratio, increased ratios of abnormal sperm head and tail and severe subfertility with significantly fewer cumulative live pups born compared with wild-type mice (PubMed:36517592). The sperm count, motility and progressive motility are reduced (PubMed:36517592). Female mice display normal fertility (PubMed:36517592).</text>
</comment>
<comment type="similarity">
    <text evidence="6">Belongs to the eukaryotic ribosomal protein eL39 family.</text>
</comment>
<comment type="online information" name="Protein Spotlight">
    <link uri="https://www.proteinspotlight.org/back_issues/258/"/>
    <text>A shrewd tweak - Issue 258 of May 2023</text>
</comment>
<reference key="1">
    <citation type="journal article" date="2005" name="Science">
        <title>The transcriptional landscape of the mammalian genome.</title>
        <authorList>
            <person name="Carninci P."/>
            <person name="Kasukawa T."/>
            <person name="Katayama S."/>
            <person name="Gough J."/>
            <person name="Frith M.C."/>
            <person name="Maeda N."/>
            <person name="Oyama R."/>
            <person name="Ravasi T."/>
            <person name="Lenhard B."/>
            <person name="Wells C."/>
            <person name="Kodzius R."/>
            <person name="Shimokawa K."/>
            <person name="Bajic V.B."/>
            <person name="Brenner S.E."/>
            <person name="Batalov S."/>
            <person name="Forrest A.R."/>
            <person name="Zavolan M."/>
            <person name="Davis M.J."/>
            <person name="Wilming L.G."/>
            <person name="Aidinis V."/>
            <person name="Allen J.E."/>
            <person name="Ambesi-Impiombato A."/>
            <person name="Apweiler R."/>
            <person name="Aturaliya R.N."/>
            <person name="Bailey T.L."/>
            <person name="Bansal M."/>
            <person name="Baxter L."/>
            <person name="Beisel K.W."/>
            <person name="Bersano T."/>
            <person name="Bono H."/>
            <person name="Chalk A.M."/>
            <person name="Chiu K.P."/>
            <person name="Choudhary V."/>
            <person name="Christoffels A."/>
            <person name="Clutterbuck D.R."/>
            <person name="Crowe M.L."/>
            <person name="Dalla E."/>
            <person name="Dalrymple B.P."/>
            <person name="de Bono B."/>
            <person name="Della Gatta G."/>
            <person name="di Bernardo D."/>
            <person name="Down T."/>
            <person name="Engstrom P."/>
            <person name="Fagiolini M."/>
            <person name="Faulkner G."/>
            <person name="Fletcher C.F."/>
            <person name="Fukushima T."/>
            <person name="Furuno M."/>
            <person name="Futaki S."/>
            <person name="Gariboldi M."/>
            <person name="Georgii-Hemming P."/>
            <person name="Gingeras T.R."/>
            <person name="Gojobori T."/>
            <person name="Green R.E."/>
            <person name="Gustincich S."/>
            <person name="Harbers M."/>
            <person name="Hayashi Y."/>
            <person name="Hensch T.K."/>
            <person name="Hirokawa N."/>
            <person name="Hill D."/>
            <person name="Huminiecki L."/>
            <person name="Iacono M."/>
            <person name="Ikeo K."/>
            <person name="Iwama A."/>
            <person name="Ishikawa T."/>
            <person name="Jakt M."/>
            <person name="Kanapin A."/>
            <person name="Katoh M."/>
            <person name="Kawasawa Y."/>
            <person name="Kelso J."/>
            <person name="Kitamura H."/>
            <person name="Kitano H."/>
            <person name="Kollias G."/>
            <person name="Krishnan S.P."/>
            <person name="Kruger A."/>
            <person name="Kummerfeld S.K."/>
            <person name="Kurochkin I.V."/>
            <person name="Lareau L.F."/>
            <person name="Lazarevic D."/>
            <person name="Lipovich L."/>
            <person name="Liu J."/>
            <person name="Liuni S."/>
            <person name="McWilliam S."/>
            <person name="Madan Babu M."/>
            <person name="Madera M."/>
            <person name="Marchionni L."/>
            <person name="Matsuda H."/>
            <person name="Matsuzawa S."/>
            <person name="Miki H."/>
            <person name="Mignone F."/>
            <person name="Miyake S."/>
            <person name="Morris K."/>
            <person name="Mottagui-Tabar S."/>
            <person name="Mulder N."/>
            <person name="Nakano N."/>
            <person name="Nakauchi H."/>
            <person name="Ng P."/>
            <person name="Nilsson R."/>
            <person name="Nishiguchi S."/>
            <person name="Nishikawa S."/>
            <person name="Nori F."/>
            <person name="Ohara O."/>
            <person name="Okazaki Y."/>
            <person name="Orlando V."/>
            <person name="Pang K.C."/>
            <person name="Pavan W.J."/>
            <person name="Pavesi G."/>
            <person name="Pesole G."/>
            <person name="Petrovsky N."/>
            <person name="Piazza S."/>
            <person name="Reed J."/>
            <person name="Reid J.F."/>
            <person name="Ring B.Z."/>
            <person name="Ringwald M."/>
            <person name="Rost B."/>
            <person name="Ruan Y."/>
            <person name="Salzberg S.L."/>
            <person name="Sandelin A."/>
            <person name="Schneider C."/>
            <person name="Schoenbach C."/>
            <person name="Sekiguchi K."/>
            <person name="Semple C.A."/>
            <person name="Seno S."/>
            <person name="Sessa L."/>
            <person name="Sheng Y."/>
            <person name="Shibata Y."/>
            <person name="Shimada H."/>
            <person name="Shimada K."/>
            <person name="Silva D."/>
            <person name="Sinclair B."/>
            <person name="Sperling S."/>
            <person name="Stupka E."/>
            <person name="Sugiura K."/>
            <person name="Sultana R."/>
            <person name="Takenaka Y."/>
            <person name="Taki K."/>
            <person name="Tammoja K."/>
            <person name="Tan S.L."/>
            <person name="Tang S."/>
            <person name="Taylor M.S."/>
            <person name="Tegner J."/>
            <person name="Teichmann S.A."/>
            <person name="Ueda H.R."/>
            <person name="van Nimwegen E."/>
            <person name="Verardo R."/>
            <person name="Wei C.L."/>
            <person name="Yagi K."/>
            <person name="Yamanishi H."/>
            <person name="Zabarovsky E."/>
            <person name="Zhu S."/>
            <person name="Zimmer A."/>
            <person name="Hide W."/>
            <person name="Bult C."/>
            <person name="Grimmond S.M."/>
            <person name="Teasdale R.D."/>
            <person name="Liu E.T."/>
            <person name="Brusic V."/>
            <person name="Quackenbush J."/>
            <person name="Wahlestedt C."/>
            <person name="Mattick J.S."/>
            <person name="Hume D.A."/>
            <person name="Kai C."/>
            <person name="Sasaki D."/>
            <person name="Tomaru Y."/>
            <person name="Fukuda S."/>
            <person name="Kanamori-Katayama M."/>
            <person name="Suzuki M."/>
            <person name="Aoki J."/>
            <person name="Arakawa T."/>
            <person name="Iida J."/>
            <person name="Imamura K."/>
            <person name="Itoh M."/>
            <person name="Kato T."/>
            <person name="Kawaji H."/>
            <person name="Kawagashira N."/>
            <person name="Kawashima T."/>
            <person name="Kojima M."/>
            <person name="Kondo S."/>
            <person name="Konno H."/>
            <person name="Nakano K."/>
            <person name="Ninomiya N."/>
            <person name="Nishio T."/>
            <person name="Okada M."/>
            <person name="Plessy C."/>
            <person name="Shibata K."/>
            <person name="Shiraki T."/>
            <person name="Suzuki S."/>
            <person name="Tagami M."/>
            <person name="Waki K."/>
            <person name="Watahiki A."/>
            <person name="Okamura-Oho Y."/>
            <person name="Suzuki H."/>
            <person name="Kawai J."/>
            <person name="Hayashizaki Y."/>
        </authorList>
    </citation>
    <scope>NUCLEOTIDE SEQUENCE [LARGE SCALE MRNA]</scope>
    <source>
        <strain>C57BL/6J</strain>
        <tissue>Testis</tissue>
    </source>
</reference>
<reference key="2">
    <citation type="journal article" date="2009" name="PLoS Biol.">
        <title>Lineage-specific biology revealed by a finished genome assembly of the mouse.</title>
        <authorList>
            <person name="Church D.M."/>
            <person name="Goodstadt L."/>
            <person name="Hillier L.W."/>
            <person name="Zody M.C."/>
            <person name="Goldstein S."/>
            <person name="She X."/>
            <person name="Bult C.J."/>
            <person name="Agarwala R."/>
            <person name="Cherry J.L."/>
            <person name="DiCuccio M."/>
            <person name="Hlavina W."/>
            <person name="Kapustin Y."/>
            <person name="Meric P."/>
            <person name="Maglott D."/>
            <person name="Birtle Z."/>
            <person name="Marques A.C."/>
            <person name="Graves T."/>
            <person name="Zhou S."/>
            <person name="Teague B."/>
            <person name="Potamousis K."/>
            <person name="Churas C."/>
            <person name="Place M."/>
            <person name="Herschleb J."/>
            <person name="Runnheim R."/>
            <person name="Forrest D."/>
            <person name="Amos-Landgraf J."/>
            <person name="Schwartz D.C."/>
            <person name="Cheng Z."/>
            <person name="Lindblad-Toh K."/>
            <person name="Eichler E.E."/>
            <person name="Ponting C.P."/>
        </authorList>
    </citation>
    <scope>NUCLEOTIDE SEQUENCE [LARGE SCALE GENOMIC DNA]</scope>
    <source>
        <strain>C57BL/6J</strain>
    </source>
</reference>
<reference key="3">
    <citation type="journal article" date="2004" name="Genome Res.">
        <title>The status, quality, and expansion of the NIH full-length cDNA project: the Mammalian Gene Collection (MGC).</title>
        <authorList>
            <consortium name="The MGC Project Team"/>
        </authorList>
    </citation>
    <scope>NUCLEOTIDE SEQUENCE [LARGE SCALE MRNA]</scope>
    <source>
        <strain>C57BL/6J</strain>
        <tissue evidence="8">Thymus</tissue>
    </source>
</reference>
<reference key="4">
    <citation type="journal article" date="2014" name="RNA Biol.">
        <title>RPL39L is an example of a recently evolved ribosomal protein paralog that shows highly specific tissue expression patterns and is upregulated in ESCs and HCC tumors.</title>
        <authorList>
            <person name="Wong Q.W."/>
            <person name="Li J."/>
            <person name="Ng S.R."/>
            <person name="Lim S.G."/>
            <person name="Yang H."/>
            <person name="Vardy L.A."/>
        </authorList>
    </citation>
    <scope>TISSUE SPECIFICITY</scope>
</reference>
<reference key="5">
    <citation type="journal article" date="2021" name="IScience">
        <title>Proteostasis regulated by testis-specific ribosomal protein RPL39L maintains mouse spermatogenesis.</title>
        <authorList>
            <person name="Zou Q."/>
            <person name="Yang L."/>
            <person name="Shi R."/>
            <person name="Qi Y."/>
            <person name="Zhang X."/>
            <person name="Qi H."/>
        </authorList>
    </citation>
    <scope>FUNCTION</scope>
    <scope>DISRUPTION PHENOTYPE</scope>
</reference>
<reference key="6">
    <citation type="journal article" date="2021" name="Int. J. Biochem. Cell Biol.">
        <title>Deletion of ribosomal paralogs Rpl39 and Rpl39l compromises cell proliferation via protein synthesis and mitochondrial activity.</title>
        <authorList>
            <person name="Zou Q."/>
            <person name="Qi H."/>
        </authorList>
    </citation>
    <scope>FUNCTION</scope>
</reference>
<reference evidence="10" key="7">
    <citation type="journal article" date="2022" name="Nature">
        <title>A male germ-cell-specific ribosome controls male fertility.</title>
        <authorList>
            <person name="Li H."/>
            <person name="Huo Y."/>
            <person name="He X."/>
            <person name="Yao L."/>
            <person name="Zhang H."/>
            <person name="Cui Y."/>
            <person name="Xiao H."/>
            <person name="Xie W."/>
            <person name="Zhang D."/>
            <person name="Wang Y."/>
            <person name="Zhang S."/>
            <person name="Tu H."/>
            <person name="Cheng Y."/>
            <person name="Guo Y."/>
            <person name="Cao X."/>
            <person name="Zhu Y."/>
            <person name="Jiang T."/>
            <person name="Guo X."/>
            <person name="Qin Y."/>
            <person name="Sha J."/>
        </authorList>
    </citation>
    <scope>STRUCTURE BY ELECTRON MICROSCOPY (3.03 ANGSTROMS) IN COMPLEX WITH TESTIS-SPECIFIC RIBOSOME</scope>
    <scope>FUNCTION</scope>
    <scope>SUBCELLULAR LOCATION</scope>
    <scope>SUBUNIT</scope>
    <scope>DISRUPTION PHENOTYPE</scope>
    <scope>TISSUE SPECIFICITY</scope>
</reference>